<dbReference type="EMBL" id="AE017143">
    <property type="protein sequence ID" value="AAP95996.1"/>
    <property type="molecule type" value="Genomic_DNA"/>
</dbReference>
<dbReference type="RefSeq" id="WP_010945045.1">
    <property type="nucleotide sequence ID" value="NC_002940.2"/>
</dbReference>
<dbReference type="SMR" id="Q7VM64"/>
<dbReference type="STRING" id="233412.HD_1134"/>
<dbReference type="KEGG" id="hdu:HD_1134"/>
<dbReference type="eggNOG" id="COG0691">
    <property type="taxonomic scope" value="Bacteria"/>
</dbReference>
<dbReference type="HOGENOM" id="CLU_108953_3_0_6"/>
<dbReference type="OrthoDB" id="9805462at2"/>
<dbReference type="Proteomes" id="UP000001022">
    <property type="component" value="Chromosome"/>
</dbReference>
<dbReference type="GO" id="GO:0005829">
    <property type="term" value="C:cytosol"/>
    <property type="evidence" value="ECO:0007669"/>
    <property type="project" value="TreeGrafter"/>
</dbReference>
<dbReference type="GO" id="GO:0003723">
    <property type="term" value="F:RNA binding"/>
    <property type="evidence" value="ECO:0007669"/>
    <property type="project" value="UniProtKB-UniRule"/>
</dbReference>
<dbReference type="GO" id="GO:0070929">
    <property type="term" value="P:trans-translation"/>
    <property type="evidence" value="ECO:0007669"/>
    <property type="project" value="UniProtKB-UniRule"/>
</dbReference>
<dbReference type="CDD" id="cd09294">
    <property type="entry name" value="SmpB"/>
    <property type="match status" value="1"/>
</dbReference>
<dbReference type="Gene3D" id="2.40.280.10">
    <property type="match status" value="1"/>
</dbReference>
<dbReference type="HAMAP" id="MF_00023">
    <property type="entry name" value="SmpB"/>
    <property type="match status" value="1"/>
</dbReference>
<dbReference type="InterPro" id="IPR023620">
    <property type="entry name" value="SmpB"/>
</dbReference>
<dbReference type="InterPro" id="IPR000037">
    <property type="entry name" value="SsrA-bd_prot"/>
</dbReference>
<dbReference type="InterPro" id="IPR020081">
    <property type="entry name" value="SsrA-bd_prot_CS"/>
</dbReference>
<dbReference type="NCBIfam" id="NF003843">
    <property type="entry name" value="PRK05422.1"/>
    <property type="match status" value="1"/>
</dbReference>
<dbReference type="NCBIfam" id="TIGR00086">
    <property type="entry name" value="smpB"/>
    <property type="match status" value="1"/>
</dbReference>
<dbReference type="PANTHER" id="PTHR30308:SF2">
    <property type="entry name" value="SSRA-BINDING PROTEIN"/>
    <property type="match status" value="1"/>
</dbReference>
<dbReference type="PANTHER" id="PTHR30308">
    <property type="entry name" value="TMRNA-BINDING COMPONENT OF TRANS-TRANSLATION TAGGING COMPLEX"/>
    <property type="match status" value="1"/>
</dbReference>
<dbReference type="Pfam" id="PF01668">
    <property type="entry name" value="SmpB"/>
    <property type="match status" value="1"/>
</dbReference>
<dbReference type="SUPFAM" id="SSF74982">
    <property type="entry name" value="Small protein B (SmpB)"/>
    <property type="match status" value="1"/>
</dbReference>
<dbReference type="PROSITE" id="PS01317">
    <property type="entry name" value="SSRP"/>
    <property type="match status" value="1"/>
</dbReference>
<reference key="1">
    <citation type="submission" date="2003-06" db="EMBL/GenBank/DDBJ databases">
        <title>The complete genome sequence of Haemophilus ducreyi.</title>
        <authorList>
            <person name="Munson R.S. Jr."/>
            <person name="Ray W.C."/>
            <person name="Mahairas G."/>
            <person name="Sabo P."/>
            <person name="Mungur R."/>
            <person name="Johnson L."/>
            <person name="Nguyen D."/>
            <person name="Wang J."/>
            <person name="Forst C."/>
            <person name="Hood L."/>
        </authorList>
    </citation>
    <scope>NUCLEOTIDE SEQUENCE [LARGE SCALE GENOMIC DNA]</scope>
    <source>
        <strain>35000HP / ATCC 700724</strain>
    </source>
</reference>
<protein>
    <recommendedName>
        <fullName evidence="1">SsrA-binding protein</fullName>
    </recommendedName>
    <alternativeName>
        <fullName evidence="1">Small protein B</fullName>
    </alternativeName>
</protein>
<comment type="function">
    <text evidence="1">Required for rescue of stalled ribosomes mediated by trans-translation. Binds to transfer-messenger RNA (tmRNA), required for stable association of tmRNA with ribosomes. tmRNA and SmpB together mimic tRNA shape, replacing the anticodon stem-loop with SmpB. tmRNA is encoded by the ssrA gene; the 2 termini fold to resemble tRNA(Ala) and it encodes a 'tag peptide', a short internal open reading frame. During trans-translation Ala-aminoacylated tmRNA acts like a tRNA, entering the A-site of stalled ribosomes, displacing the stalled mRNA. The ribosome then switches to translate the ORF on the tmRNA; the nascent peptide is terminated with the 'tag peptide' encoded by the tmRNA and targeted for degradation. The ribosome is freed to recommence translation, which seems to be the essential function of trans-translation.</text>
</comment>
<comment type="subcellular location">
    <subcellularLocation>
        <location evidence="1">Cytoplasm</location>
    </subcellularLocation>
    <text evidence="1">The tmRNA-SmpB complex associates with stalled 70S ribosomes.</text>
</comment>
<comment type="similarity">
    <text evidence="1">Belongs to the SmpB family.</text>
</comment>
<sequence>MAKKPKVPSNTIALNKRARHEYFIEDEIEAGLALQGWEVKSLRAGKANIGDSYVTFRHGEAFLFGATITPLNMASTHIVADPTRTRKLLLNQRELDSLFGKVNRDGMTVVALSLYWKNAWAKVKIGLAKGKKLHDKREDIKDREWHVTKQRIMKNAGRGS</sequence>
<accession>Q7VM64</accession>
<gene>
    <name evidence="1" type="primary">smpB</name>
    <name type="ordered locus">HD_1134</name>
</gene>
<keyword id="KW-0963">Cytoplasm</keyword>
<keyword id="KW-1185">Reference proteome</keyword>
<keyword id="KW-0694">RNA-binding</keyword>
<organism>
    <name type="scientific">Haemophilus ducreyi (strain 35000HP / ATCC 700724)</name>
    <dbReference type="NCBI Taxonomy" id="233412"/>
    <lineage>
        <taxon>Bacteria</taxon>
        <taxon>Pseudomonadati</taxon>
        <taxon>Pseudomonadota</taxon>
        <taxon>Gammaproteobacteria</taxon>
        <taxon>Pasteurellales</taxon>
        <taxon>Pasteurellaceae</taxon>
        <taxon>Haemophilus</taxon>
    </lineage>
</organism>
<evidence type="ECO:0000255" key="1">
    <source>
        <dbReference type="HAMAP-Rule" id="MF_00023"/>
    </source>
</evidence>
<proteinExistence type="inferred from homology"/>
<feature type="chain" id="PRO_0000102956" description="SsrA-binding protein">
    <location>
        <begin position="1"/>
        <end position="160"/>
    </location>
</feature>
<name>SSRP_HAEDU</name>